<accession>F2K081</accession>
<sequence>MRYYEEDANVTDSPNRNAAPKLIPTIKLGSQDNHDMMWNEDFHLTITNMAKKYGAIYALETGKTTLIALNDHNAVREALVNQSDVFNIRADLEILQVAPQKHFLELEAGELWSLHRKTFATAMRDYFRDRWDTMDQWLVTEIDDIEAAWKSQGDQAVFDPNRDISIKLASFLHRVMFDRRFGEFEESVFDEKSLSWLPAGFINSTRYELMPEHNKESYYAHYGDVIEKFASNLNGLDAYVSMNVLKEKECYNKGQYRHLTDFLLNACDDIPNDVKQQVGATEKEIIIGSLTQVAGAGGGVGAFALRWMLLYLASFPEKQKQVHAELDQVIGQNETPQQSHKGDLHYTQAFIAEVLRHCSITSMPASNYAASKDTFIDGYFVAKGTPLIVNNYGMTRDEALWENPDEFIPERFLEADGTFSKKQQAKSFPFGIGQRRCLGELFGKFLINTLFTHLAHRFEFSLPNNEPINLRAISGVFLVPEKVDIKAKSRSLSDS</sequence>
<feature type="chain" id="PRO_0000459990" description="Polybrominated aromatic compounds synthase">
    <location>
        <begin position="1"/>
        <end position="495"/>
    </location>
</feature>
<feature type="binding site" description="axial binding residue" evidence="1">
    <location>
        <position position="437"/>
    </location>
    <ligand>
        <name>heme</name>
        <dbReference type="ChEBI" id="CHEBI:30413"/>
    </ligand>
    <ligandPart>
        <name>Fe</name>
        <dbReference type="ChEBI" id="CHEBI:18248"/>
    </ligandPart>
</feature>
<organism>
    <name type="scientific">Marinomonas mediterranea (strain ATCC 700492 / JCM 21426 / NBRC 103028 / MMB-1)</name>
    <dbReference type="NCBI Taxonomy" id="717774"/>
    <lineage>
        <taxon>Bacteria</taxon>
        <taxon>Pseudomonadati</taxon>
        <taxon>Pseudomonadota</taxon>
        <taxon>Gammaproteobacteria</taxon>
        <taxon>Oceanospirillales</taxon>
        <taxon>Oceanospirillaceae</taxon>
        <taxon>Marinomonas</taxon>
    </lineage>
</organism>
<evidence type="ECO:0000250" key="1">
    <source>
        <dbReference type="UniProtKB" id="Q9K498"/>
    </source>
</evidence>
<evidence type="ECO:0000250" key="2">
    <source>
        <dbReference type="UniProtKB" id="V4HJ73"/>
    </source>
</evidence>
<evidence type="ECO:0000269" key="3">
    <source>
    </source>
</evidence>
<evidence type="ECO:0000303" key="4">
    <source>
    </source>
</evidence>
<evidence type="ECO:0000305" key="5"/>
<evidence type="ECO:0000305" key="6">
    <source>
    </source>
</evidence>
<evidence type="ECO:0000312" key="7">
    <source>
        <dbReference type="EMBL" id="ADZ93295.1"/>
    </source>
</evidence>
<name>BMP7_MARM1</name>
<proteinExistence type="inferred from homology"/>
<dbReference type="EC" id="1.14.19.-" evidence="6"/>
<dbReference type="EMBL" id="CP002583">
    <property type="protein sequence ID" value="ADZ93295.1"/>
    <property type="molecule type" value="Genomic_DNA"/>
</dbReference>
<dbReference type="RefSeq" id="WP_013663197.1">
    <property type="nucleotide sequence ID" value="NC_015276.1"/>
</dbReference>
<dbReference type="SMR" id="F2K081"/>
<dbReference type="STRING" id="717774.Marme_4095"/>
<dbReference type="KEGG" id="mme:Marme_4095"/>
<dbReference type="PATRIC" id="fig|717774.3.peg.4238"/>
<dbReference type="eggNOG" id="COG2124">
    <property type="taxonomic scope" value="Bacteria"/>
</dbReference>
<dbReference type="HOGENOM" id="CLU_001570_22_0_6"/>
<dbReference type="OrthoDB" id="9764248at2"/>
<dbReference type="BioCyc" id="MetaCyc:MONOMER-20328"/>
<dbReference type="Proteomes" id="UP000001062">
    <property type="component" value="Chromosome"/>
</dbReference>
<dbReference type="GO" id="GO:0020037">
    <property type="term" value="F:heme binding"/>
    <property type="evidence" value="ECO:0007669"/>
    <property type="project" value="InterPro"/>
</dbReference>
<dbReference type="GO" id="GO:0005506">
    <property type="term" value="F:iron ion binding"/>
    <property type="evidence" value="ECO:0007669"/>
    <property type="project" value="InterPro"/>
</dbReference>
<dbReference type="GO" id="GO:0004508">
    <property type="term" value="F:steroid 17-alpha-monooxygenase activity"/>
    <property type="evidence" value="ECO:0007669"/>
    <property type="project" value="TreeGrafter"/>
</dbReference>
<dbReference type="GO" id="GO:0042446">
    <property type="term" value="P:hormone biosynthetic process"/>
    <property type="evidence" value="ECO:0007669"/>
    <property type="project" value="TreeGrafter"/>
</dbReference>
<dbReference type="GO" id="GO:0042448">
    <property type="term" value="P:progesterone metabolic process"/>
    <property type="evidence" value="ECO:0007669"/>
    <property type="project" value="TreeGrafter"/>
</dbReference>
<dbReference type="Gene3D" id="1.10.630.10">
    <property type="entry name" value="Cytochrome P450"/>
    <property type="match status" value="1"/>
</dbReference>
<dbReference type="InterPro" id="IPR001128">
    <property type="entry name" value="Cyt_P450"/>
</dbReference>
<dbReference type="InterPro" id="IPR017972">
    <property type="entry name" value="Cyt_P450_CS"/>
</dbReference>
<dbReference type="InterPro" id="IPR002401">
    <property type="entry name" value="Cyt_P450_E_grp-I"/>
</dbReference>
<dbReference type="InterPro" id="IPR036396">
    <property type="entry name" value="Cyt_P450_sf"/>
</dbReference>
<dbReference type="PANTHER" id="PTHR24289:SF21">
    <property type="entry name" value="CYTOCHROME P450 1A"/>
    <property type="match status" value="1"/>
</dbReference>
<dbReference type="PANTHER" id="PTHR24289">
    <property type="entry name" value="STEROID 17-ALPHA-HYDROXYLASE/17,20 LYASE"/>
    <property type="match status" value="1"/>
</dbReference>
<dbReference type="Pfam" id="PF00067">
    <property type="entry name" value="p450"/>
    <property type="match status" value="1"/>
</dbReference>
<dbReference type="PRINTS" id="PR00463">
    <property type="entry name" value="EP450I"/>
</dbReference>
<dbReference type="PRINTS" id="PR00385">
    <property type="entry name" value="P450"/>
</dbReference>
<dbReference type="SUPFAM" id="SSF48264">
    <property type="entry name" value="Cytochrome P450"/>
    <property type="match status" value="1"/>
</dbReference>
<dbReference type="PROSITE" id="PS00086">
    <property type="entry name" value="CYTOCHROME_P450"/>
    <property type="match status" value="1"/>
</dbReference>
<comment type="function">
    <text evidence="2 3">Cytochrome P450 protein involved in the biosynthesis of polybrominated aromatic organic compounds (PubMed:25061970). In the presence of ferredoxin, ferredoxin reductase and NADH, catalyzes the coupling of bromophenols and bromopyrroles, forming various polybrominated biphenyls and hydroxylated polybrominated diphenyl ethers (OH-BDE) (By similarity). Can also mediate the heterocoupling of 3,5-dibromocatechol, forming six different compounds, including polybrominated dibenzo-p-dioxins, which are among the most toxic molecules known to man (PubMed:25061970).</text>
</comment>
<comment type="cofactor">
    <cofactor evidence="1">
        <name>heme</name>
        <dbReference type="ChEBI" id="CHEBI:30413"/>
    </cofactor>
</comment>
<comment type="similarity">
    <text evidence="5">Belongs to the cytochrome P450 family.</text>
</comment>
<gene>
    <name evidence="4" type="primary">bmp7</name>
    <name evidence="7" type="ordered locus">Marme_4095</name>
</gene>
<reference key="1">
    <citation type="journal article" date="2012" name="Stand. Genomic Sci.">
        <title>Complete genome sequence of the melanogenic marine bacterium Marinomonas mediterranea type strain (MMB-1(T)).</title>
        <authorList>
            <person name="Lucas-Elio P."/>
            <person name="Goodwin L."/>
            <person name="Woyke T."/>
            <person name="Pitluck S."/>
            <person name="Nolan M."/>
            <person name="Kyrpides N.C."/>
            <person name="Detter J.C."/>
            <person name="Copeland A."/>
            <person name="Teshima H."/>
            <person name="Bruce D."/>
            <person name="Detter C."/>
            <person name="Tapia R."/>
            <person name="Han S."/>
            <person name="Land M.L."/>
            <person name="Ivanova N."/>
            <person name="Mikhailova N."/>
            <person name="Johnston A.W."/>
            <person name="Sanchez-Amat A."/>
        </authorList>
    </citation>
    <scope>NUCLEOTIDE SEQUENCE [LARGE SCALE GENOMIC DNA]</scope>
    <source>
        <strain>ATCC 700492 / JCM 21426 / NBRC 103028 / MMB-1</strain>
    </source>
</reference>
<reference key="2">
    <citation type="journal article" date="2014" name="ACS Chem. Biol.">
        <title>Enzymatic synthesis of polybrominated dioxins from the marine environment.</title>
        <authorList>
            <person name="Agarwal V."/>
            <person name="Moore B.S."/>
        </authorList>
    </citation>
    <scope>FUNCTION</scope>
    <source>
        <strain>ATCC 700492 / JCM 21426 / NBRC 103028 / MMB-1</strain>
    </source>
</reference>
<keyword id="KW-0349">Heme</keyword>
<keyword id="KW-0408">Iron</keyword>
<keyword id="KW-0479">Metal-binding</keyword>
<keyword id="KW-0560">Oxidoreductase</keyword>
<keyword id="KW-1185">Reference proteome</keyword>
<protein>
    <recommendedName>
        <fullName evidence="5">Polybrominated aromatic compounds synthase</fullName>
        <ecNumber evidence="6">1.14.19.-</ecNumber>
    </recommendedName>
    <alternativeName>
        <fullName evidence="4">CYP450 Bmp7</fullName>
    </alternativeName>
</protein>